<comment type="function">
    <text evidence="1">Catalyzes the anti-1,4-elimination of the C-3 phosphate and the C-6 proR hydrogen from 5-enolpyruvylshikimate-3-phosphate (EPSP) to yield chorismate, which is the branch point compound that serves as the starting substrate for the three terminal pathways of aromatic amino acid biosynthesis. This reaction introduces a second double bond into the aromatic ring system.</text>
</comment>
<comment type="catalytic activity">
    <reaction evidence="1">
        <text>5-O-(1-carboxyvinyl)-3-phosphoshikimate = chorismate + phosphate</text>
        <dbReference type="Rhea" id="RHEA:21020"/>
        <dbReference type="ChEBI" id="CHEBI:29748"/>
        <dbReference type="ChEBI" id="CHEBI:43474"/>
        <dbReference type="ChEBI" id="CHEBI:57701"/>
        <dbReference type="EC" id="4.2.3.5"/>
    </reaction>
</comment>
<comment type="cofactor">
    <cofactor evidence="1">
        <name>FMNH2</name>
        <dbReference type="ChEBI" id="CHEBI:57618"/>
    </cofactor>
    <text evidence="1">Reduced FMN (FMNH(2)).</text>
</comment>
<comment type="pathway">
    <text evidence="1">Metabolic intermediate biosynthesis; chorismate biosynthesis; chorismate from D-erythrose 4-phosphate and phosphoenolpyruvate: step 7/7.</text>
</comment>
<comment type="subunit">
    <text evidence="1">Homotetramer.</text>
</comment>
<comment type="similarity">
    <text evidence="1">Belongs to the chorismate synthase family.</text>
</comment>
<reference key="1">
    <citation type="journal article" date="2001" name="Proc. Natl. Acad. Sci. U.S.A.">
        <title>Complete genome sequence of Caulobacter crescentus.</title>
        <authorList>
            <person name="Nierman W.C."/>
            <person name="Feldblyum T.V."/>
            <person name="Laub M.T."/>
            <person name="Paulsen I.T."/>
            <person name="Nelson K.E."/>
            <person name="Eisen J.A."/>
            <person name="Heidelberg J.F."/>
            <person name="Alley M.R.K."/>
            <person name="Ohta N."/>
            <person name="Maddock J.R."/>
            <person name="Potocka I."/>
            <person name="Nelson W.C."/>
            <person name="Newton A."/>
            <person name="Stephens C."/>
            <person name="Phadke N.D."/>
            <person name="Ely B."/>
            <person name="DeBoy R.T."/>
            <person name="Dodson R.J."/>
            <person name="Durkin A.S."/>
            <person name="Gwinn M.L."/>
            <person name="Haft D.H."/>
            <person name="Kolonay J.F."/>
            <person name="Smit J."/>
            <person name="Craven M.B."/>
            <person name="Khouri H.M."/>
            <person name="Shetty J."/>
            <person name="Berry K.J."/>
            <person name="Utterback T.R."/>
            <person name="Tran K."/>
            <person name="Wolf A.M."/>
            <person name="Vamathevan J.J."/>
            <person name="Ermolaeva M.D."/>
            <person name="White O."/>
            <person name="Salzberg S.L."/>
            <person name="Venter J.C."/>
            <person name="Shapiro L."/>
            <person name="Fraser C.M."/>
        </authorList>
    </citation>
    <scope>NUCLEOTIDE SEQUENCE [LARGE SCALE GENOMIC DNA]</scope>
    <source>
        <strain>ATCC 19089 / CIP 103742 / CB 15</strain>
    </source>
</reference>
<feature type="chain" id="PRO_0000140571" description="Chorismate synthase">
    <location>
        <begin position="1"/>
        <end position="372"/>
    </location>
</feature>
<feature type="binding site" evidence="1">
    <location>
        <position position="48"/>
    </location>
    <ligand>
        <name>NADP(+)</name>
        <dbReference type="ChEBI" id="CHEBI:58349"/>
    </ligand>
</feature>
<feature type="binding site" evidence="1">
    <location>
        <begin position="131"/>
        <end position="133"/>
    </location>
    <ligand>
        <name>FMN</name>
        <dbReference type="ChEBI" id="CHEBI:58210"/>
    </ligand>
</feature>
<feature type="binding site" evidence="1">
    <location>
        <begin position="243"/>
        <end position="244"/>
    </location>
    <ligand>
        <name>FMN</name>
        <dbReference type="ChEBI" id="CHEBI:58210"/>
    </ligand>
</feature>
<feature type="binding site" evidence="1">
    <location>
        <position position="288"/>
    </location>
    <ligand>
        <name>FMN</name>
        <dbReference type="ChEBI" id="CHEBI:58210"/>
    </ligand>
</feature>
<feature type="binding site" evidence="1">
    <location>
        <begin position="303"/>
        <end position="307"/>
    </location>
    <ligand>
        <name>FMN</name>
        <dbReference type="ChEBI" id="CHEBI:58210"/>
    </ligand>
</feature>
<feature type="binding site" evidence="1">
    <location>
        <position position="329"/>
    </location>
    <ligand>
        <name>FMN</name>
        <dbReference type="ChEBI" id="CHEBI:58210"/>
    </ligand>
</feature>
<dbReference type="EC" id="4.2.3.5" evidence="1"/>
<dbReference type="EMBL" id="AE005673">
    <property type="protein sequence ID" value="AAK25116.1"/>
    <property type="molecule type" value="Genomic_DNA"/>
</dbReference>
<dbReference type="PIR" id="H87639">
    <property type="entry name" value="H87639"/>
</dbReference>
<dbReference type="RefSeq" id="NP_421948.1">
    <property type="nucleotide sequence ID" value="NC_002696.2"/>
</dbReference>
<dbReference type="RefSeq" id="WP_010920990.1">
    <property type="nucleotide sequence ID" value="NC_002696.2"/>
</dbReference>
<dbReference type="SMR" id="Q9A3P8"/>
<dbReference type="STRING" id="190650.CC_3154"/>
<dbReference type="EnsemblBacteria" id="AAK25116">
    <property type="protein sequence ID" value="AAK25116"/>
    <property type="gene ID" value="CC_3154"/>
</dbReference>
<dbReference type="KEGG" id="ccr:CC_3154"/>
<dbReference type="PATRIC" id="fig|190650.5.peg.3163"/>
<dbReference type="eggNOG" id="COG0082">
    <property type="taxonomic scope" value="Bacteria"/>
</dbReference>
<dbReference type="HOGENOM" id="CLU_034547_0_0_5"/>
<dbReference type="BioCyc" id="CAULO:CC3154-MONOMER"/>
<dbReference type="UniPathway" id="UPA00053">
    <property type="reaction ID" value="UER00090"/>
</dbReference>
<dbReference type="Proteomes" id="UP000001816">
    <property type="component" value="Chromosome"/>
</dbReference>
<dbReference type="GO" id="GO:0005829">
    <property type="term" value="C:cytosol"/>
    <property type="evidence" value="ECO:0007669"/>
    <property type="project" value="TreeGrafter"/>
</dbReference>
<dbReference type="GO" id="GO:0004107">
    <property type="term" value="F:chorismate synthase activity"/>
    <property type="evidence" value="ECO:0007669"/>
    <property type="project" value="UniProtKB-UniRule"/>
</dbReference>
<dbReference type="GO" id="GO:0010181">
    <property type="term" value="F:FMN binding"/>
    <property type="evidence" value="ECO:0007669"/>
    <property type="project" value="TreeGrafter"/>
</dbReference>
<dbReference type="GO" id="GO:0008652">
    <property type="term" value="P:amino acid biosynthetic process"/>
    <property type="evidence" value="ECO:0007669"/>
    <property type="project" value="UniProtKB-KW"/>
</dbReference>
<dbReference type="GO" id="GO:0009073">
    <property type="term" value="P:aromatic amino acid family biosynthetic process"/>
    <property type="evidence" value="ECO:0007669"/>
    <property type="project" value="UniProtKB-KW"/>
</dbReference>
<dbReference type="GO" id="GO:0009423">
    <property type="term" value="P:chorismate biosynthetic process"/>
    <property type="evidence" value="ECO:0007669"/>
    <property type="project" value="UniProtKB-UniRule"/>
</dbReference>
<dbReference type="CDD" id="cd07304">
    <property type="entry name" value="Chorismate_synthase"/>
    <property type="match status" value="1"/>
</dbReference>
<dbReference type="Gene3D" id="3.60.150.10">
    <property type="entry name" value="Chorismate synthase AroC"/>
    <property type="match status" value="1"/>
</dbReference>
<dbReference type="HAMAP" id="MF_00300">
    <property type="entry name" value="Chorismate_synth"/>
    <property type="match status" value="1"/>
</dbReference>
<dbReference type="InterPro" id="IPR000453">
    <property type="entry name" value="Chorismate_synth"/>
</dbReference>
<dbReference type="InterPro" id="IPR035904">
    <property type="entry name" value="Chorismate_synth_AroC_sf"/>
</dbReference>
<dbReference type="InterPro" id="IPR020541">
    <property type="entry name" value="Chorismate_synthase_CS"/>
</dbReference>
<dbReference type="NCBIfam" id="TIGR00033">
    <property type="entry name" value="aroC"/>
    <property type="match status" value="1"/>
</dbReference>
<dbReference type="NCBIfam" id="NF003793">
    <property type="entry name" value="PRK05382.1"/>
    <property type="match status" value="1"/>
</dbReference>
<dbReference type="PANTHER" id="PTHR21085">
    <property type="entry name" value="CHORISMATE SYNTHASE"/>
    <property type="match status" value="1"/>
</dbReference>
<dbReference type="PANTHER" id="PTHR21085:SF0">
    <property type="entry name" value="CHORISMATE SYNTHASE"/>
    <property type="match status" value="1"/>
</dbReference>
<dbReference type="Pfam" id="PF01264">
    <property type="entry name" value="Chorismate_synt"/>
    <property type="match status" value="1"/>
</dbReference>
<dbReference type="PIRSF" id="PIRSF001456">
    <property type="entry name" value="Chorismate_synth"/>
    <property type="match status" value="1"/>
</dbReference>
<dbReference type="SUPFAM" id="SSF103263">
    <property type="entry name" value="Chorismate synthase, AroC"/>
    <property type="match status" value="1"/>
</dbReference>
<dbReference type="PROSITE" id="PS00787">
    <property type="entry name" value="CHORISMATE_SYNTHASE_1"/>
    <property type="match status" value="1"/>
</dbReference>
<dbReference type="PROSITE" id="PS00788">
    <property type="entry name" value="CHORISMATE_SYNTHASE_2"/>
    <property type="match status" value="1"/>
</dbReference>
<dbReference type="PROSITE" id="PS00789">
    <property type="entry name" value="CHORISMATE_SYNTHASE_3"/>
    <property type="match status" value="1"/>
</dbReference>
<protein>
    <recommendedName>
        <fullName evidence="1">Chorismate synthase</fullName>
        <shortName evidence="1">CS</shortName>
        <ecNumber evidence="1">4.2.3.5</ecNumber>
    </recommendedName>
    <alternativeName>
        <fullName evidence="1">5-enolpyruvylshikimate-3-phosphate phospholyase</fullName>
    </alternativeName>
</protein>
<proteinExistence type="inferred from homology"/>
<gene>
    <name evidence="1" type="primary">aroC</name>
    <name type="ordered locus">CC_3154</name>
</gene>
<evidence type="ECO:0000255" key="1">
    <source>
        <dbReference type="HAMAP-Rule" id="MF_00300"/>
    </source>
</evidence>
<name>AROC_CAUVC</name>
<accession>Q9A3P8</accession>
<organism>
    <name type="scientific">Caulobacter vibrioides (strain ATCC 19089 / CIP 103742 / CB 15)</name>
    <name type="common">Caulobacter crescentus</name>
    <dbReference type="NCBI Taxonomy" id="190650"/>
    <lineage>
        <taxon>Bacteria</taxon>
        <taxon>Pseudomonadati</taxon>
        <taxon>Pseudomonadota</taxon>
        <taxon>Alphaproteobacteria</taxon>
        <taxon>Caulobacterales</taxon>
        <taxon>Caulobacteraceae</taxon>
        <taxon>Caulobacter</taxon>
    </lineage>
</organism>
<sequence>MSHNTFGHLFRVTTWGESHGPALGCVVDGCPPGIALTAEMIQVFLDKRRPGNGKFVTQRQEPDAVRILSGVFEDARSNGQRTTGTPISLMIENTDQRSKDYSEIAQAFRPGHADYAYFAKYGVRDYRGGGRSSARETAARVAAGAVARLIIPGVTVRAALVQIGPHKIDRSNWDWAQTEQNPYWSPDAAIVPVWEEHLEKIRKAGSSTGAVVEVEATGVPAGWGAPLYAKLDAELAAALMSINAAKGVEIGDGFDSAALTGEDNADTMRMGDDGQPVFQSNHAGGILGGISSGQPIVARVAFKPTSSILIPRETVNEAGEEIELRTKGRHDPCVGIRGVPVVEAMTACVLADAFLRHRGQTGREHFPLGASA</sequence>
<keyword id="KW-0028">Amino-acid biosynthesis</keyword>
<keyword id="KW-0057">Aromatic amino acid biosynthesis</keyword>
<keyword id="KW-0274">FAD</keyword>
<keyword id="KW-0285">Flavoprotein</keyword>
<keyword id="KW-0288">FMN</keyword>
<keyword id="KW-0456">Lyase</keyword>
<keyword id="KW-0521">NADP</keyword>
<keyword id="KW-1185">Reference proteome</keyword>